<protein>
    <recommendedName>
        <fullName evidence="1">Polyprotein pp220</fullName>
    </recommendedName>
    <alternativeName>
        <fullName>220 kDa polyprotein</fullName>
    </alternativeName>
    <component>
        <recommendedName>
            <fullName evidence="1">p34</fullName>
        </recommendedName>
    </component>
    <component>
        <recommendedName>
            <fullName evidence="1">p14</fullName>
        </recommendedName>
    </component>
    <component>
        <recommendedName>
            <fullName evidence="1">p37</fullName>
        </recommendedName>
    </component>
    <component>
        <recommendedName>
            <fullName evidence="1">p150</fullName>
        </recommendedName>
    </component>
    <component>
        <recommendedName>
            <fullName evidence="1">p5</fullName>
        </recommendedName>
    </component>
</protein>
<proteinExistence type="inferred from homology"/>
<sequence>MGNRGSSTSSRPPLSSEANIYAKLQDHIQRQTRPFSGGGYFNGGGDKNPVQHIKDYHIDSVSSKAKLRIIEGIIKAISKIGFKIDTKQPIEDILKDIKKQLPDPRAGSTFVKNAEKQETVCKMIADAINQEFIDLGQDKLIDTTEGAASICRQIVLYINSLTHGLRAEYLDVHGSIENTLENIKLLNDAIKQLHERMVTEVTKAAPNEEVINAVTMIEAVYRRLLNEQNLQISILTNFIDNILTPTQKELDKLQTDEVDIIKLLNDTNSVLGTKNFGKVLSYTLCNLGIAASVANKINKALQRVGLKVEQYLQSKNWAEFDKELDLKRFSGLVSAENIAEFEKAVNLLRQTFNERHKILENNCAKKGGDEVKTPLDKRIEAQRLDRKHILMEFLNKSTQAYNDFLENVKKIGIKLVKEIALTPNITRLRDALSRINDMGTIALDLSLIGFYTNAAAREERETFLTQLTLVKNVLEEISKTDPNFKNLYDSCFRLLQIIDFYTDIVQKKYGGGEDCECTRVGGAALTVEELGLSKAARSQVDLNQAINTFMYYYYVAQIYSNLTHNKQEFQSYEENYATILGDAIAGRLMQLDTEKNARINSPAVDLARGHVGPNPGGAQEVDWKAAVSAIELEYDVKRRFYRALEGLDLYLKNITKTFVNNIDSIQTVQQMLDGVRIIGRWFTEATGDTLAQVFESFPTSAGNDSNVFTDNAPAGHYYEKVAAEIQQGRSVGTLRPVRASQAKNIRDLIGRSLSNFQALKNIINAFARIGDMLGGEELRQMVPMSPLQIYKTLLEYLQHSALSVGLKNLNQSEIGGQRMALAQTAEEAAQRVYLSTVRVNDALSSRWETEDMFFTFMLKSMAAKIFIVLGIYDMFERPEPVYKLIPTRMILGGADELEPEVIPEAAELYFRLPRLAEFYQKLFSFRDGNVQISMLPELEGIFSGLIRIIFMRPIELINIGDYSETEIRQLIKEINVIYQHFNLEYGEQEATKKALIHFVNEINRRFGVITRTEWEKFQRIVQEARTMNDFGMMNQTNYSILPDEDGYTQSSQLLPSDRFIGPSSQPTPKWRPALYNIDSVDVQTGMLQPNSQWDLVQKFRKQLSEMFEDPSLQQELGKISYQELIRQAINELKKEHTDKIQIVSKLIQGSESLADTDVNKIFLFHETVITGLNLLSAIYVLLNNFRNNIKGLDLDTIQKSIIEWLRETQPPDVNHANLLDWLGRKHGAISEIRNPGLVVKANNARLSEVYPDPTTDANTPQDRNLTTETLFAWIVQYVGIPAGGGVRPEQELAARYLVDNQRIMQLLLTNIFEITSSFNKMIQVRFPETSTAHVHLDFTGLISLIDSLMADTKYFLDLLRPHIDKNIIQYYENRSNPGSFYWLEEHLIDKLIKPPTDARGRPLPGGELGLEGVNQIINKTYTLLTKPYNVLQLRGGAQRRDAANIQINNNPQSSERFEQYGRVFSKLVFYDALENNSGLRVEQVALGDFRLSNLIRTNNAQEENTLSYWDNIALRTYANVNDAANNLRRYRLYGSDYGIQNNRSMMMVFNQLIASYITRFYDAPSGKIYLNLINAFANGNFSQAVMEMGYAHPDLARNNNAFGHRGDPTEQSVLLLSLGLILQRLIKDTNRQGLSQHLISTLTEIPIYLKENYRANLPLFNKMFNILISQGELLKQFIQYTNVQLARPNLTALLRANNDSVIYYNNNNVPMTGLSIGQAAMRGIGGVFRPNVTLMPLGDAQNNTSDIVRKRLVAVIDGIIRGSHTLADSAMEVLHELTDHPIYLETEEHFIQNYMSRYNKEPLMPFSLSLYYLRDLRIENNEVYDPLLYPNLESGSPEFKLLYGTRKLLGNDPVQLSDMPGVQLIMKNYNETVVAREQITPTRFEHFYTHAIQALRFIVNIRSFKTVMTYNENTFGGVNLISEDRNDKPIITAGIGMNAVYSLRKTLQDVISFVESSYQEEQINNIHKIVSPKGQTRTLGSNRERERIFNLFDMNIIPINVNALMRSIPLANIYNYDYSFEEIACLMYGISAEKVRSLNTAAPQPDVAEVLNIPNRPPINTREFMLKLLINPYVSVSITQYGNELLSKGNAGYMSRIFRGDNALNMGRPKFLSDQIFNKVLFGSLYPTQFDYDEAGPSLAAGIQRGRERWGHPMSIYINQALHEIVRTIRLAETVRGLRNVIDRNQIIGELNAFRTQLEDTLREVNNLVQTPEIQNNPTPEIIAAVQNWGQQYRAQITDLIDLIGNAGQANSMISLIQNINVQTAGAQLTALFNRRGLPAPPPRQVLQNDIEAIQWFMTIVINHPPILIAPFMLLVNNLKEFLNTLERYVYKTPRWLGPGTARIAQPPVGMAPGINMRHHTSYTENSVLTYITEQNREEGPWSIVKQVGVGIQKPTLVQIGKDRFDTRLIRNLIFITNVQRLLRLRLNLELSQFRNVLVSPDHIINPSITEYGFSITGPSETFSDKQYDSDIRIL</sequence>
<accession>P0CA02</accession>
<name>PP220_ASFM2</name>
<organism>
    <name type="scientific">African swine fever virus (isolate Tick/Malawi/Lil 20-1/1983)</name>
    <name type="common">ASFV</name>
    <dbReference type="NCBI Taxonomy" id="10500"/>
    <lineage>
        <taxon>Viruses</taxon>
        <taxon>Varidnaviria</taxon>
        <taxon>Bamfordvirae</taxon>
        <taxon>Nucleocytoviricota</taxon>
        <taxon>Pokkesviricetes</taxon>
        <taxon>Asfuvirales</taxon>
        <taxon>Asfarviridae</taxon>
        <taxon>Asfivirus</taxon>
        <taxon>African swine fever virus</taxon>
    </lineage>
</organism>
<organismHost>
    <name type="scientific">Ornithodoros</name>
    <name type="common">relapsing fever ticks</name>
    <dbReference type="NCBI Taxonomy" id="6937"/>
</organismHost>
<organismHost>
    <name type="scientific">Phacochoerus aethiopicus</name>
    <name type="common">Warthog</name>
    <dbReference type="NCBI Taxonomy" id="85517"/>
</organismHost>
<organismHost>
    <name type="scientific">Phacochoerus africanus</name>
    <name type="common">Warthog</name>
    <dbReference type="NCBI Taxonomy" id="41426"/>
</organismHost>
<organismHost>
    <name type="scientific">Potamochoerus larvatus</name>
    <name type="common">Bushpig</name>
    <dbReference type="NCBI Taxonomy" id="273792"/>
</organismHost>
<organismHost>
    <name type="scientific">Sus scrofa</name>
    <name type="common">Pig</name>
    <dbReference type="NCBI Taxonomy" id="9823"/>
</organismHost>
<keyword id="KW-0175">Coiled coil</keyword>
<keyword id="KW-1035">Host cytoplasm</keyword>
<keyword id="KW-1048">Host nucleus</keyword>
<keyword id="KW-0426">Late protein</keyword>
<keyword id="KW-0449">Lipoprotein</keyword>
<keyword id="KW-0519">Myristate</keyword>
<keyword id="KW-0946">Virion</keyword>
<reference key="1">
    <citation type="submission" date="2003-03" db="EMBL/GenBank/DDBJ databases">
        <title>African swine fever virus genomes.</title>
        <authorList>
            <person name="Kutish G.F."/>
            <person name="Rock D.L."/>
        </authorList>
    </citation>
    <scope>NUCLEOTIDE SEQUENCE [LARGE SCALE GENOMIC DNA]</scope>
</reference>
<evidence type="ECO:0000250" key="1">
    <source>
        <dbReference type="UniProtKB" id="Q08358"/>
    </source>
</evidence>
<evidence type="ECO:0000255" key="2"/>
<evidence type="ECO:0000305" key="3"/>
<gene>
    <name type="ordered locus">Mal-100</name>
</gene>
<dbReference type="EMBL" id="AY261361">
    <property type="status" value="NOT_ANNOTATED_CDS"/>
    <property type="molecule type" value="Genomic_DNA"/>
</dbReference>
<dbReference type="SMR" id="P0CA02"/>
<dbReference type="Proteomes" id="UP000000860">
    <property type="component" value="Segment"/>
</dbReference>
<dbReference type="GO" id="GO:0042025">
    <property type="term" value="C:host cell nucleus"/>
    <property type="evidence" value="ECO:0007669"/>
    <property type="project" value="UniProtKB-SubCell"/>
</dbReference>
<dbReference type="GO" id="GO:0044220">
    <property type="term" value="C:host cell perinuclear region of cytoplasm"/>
    <property type="evidence" value="ECO:0007669"/>
    <property type="project" value="UniProtKB-SubCell"/>
</dbReference>
<dbReference type="GO" id="GO:0044423">
    <property type="term" value="C:virion component"/>
    <property type="evidence" value="ECO:0007669"/>
    <property type="project" value="UniProtKB-KW"/>
</dbReference>
<comment type="function">
    <molecule>Polyprotein pp220</molecule>
    <text evidence="1">Essential for the core assembly. Its myristoyl moiety may function as a membrane-anchoring signal to bind the developing core shell to the inner viral envelope.</text>
</comment>
<comment type="function">
    <molecule>p34</molecule>
    <text evidence="1">The structural protein p34 is a component of the virus core shell.</text>
</comment>
<comment type="function">
    <molecule>p14</molecule>
    <text evidence="1">The structural protein p14 is a component of the virus core shell.</text>
</comment>
<comment type="function">
    <molecule>p37</molecule>
    <text evidence="1">The structural protein p37 is a component of the virus core shell.</text>
</comment>
<comment type="function">
    <molecule>p150</molecule>
    <text evidence="1">The structural protein p150 is a component of the virus core shell.</text>
</comment>
<comment type="subcellular location">
    <molecule>Polyprotein pp220</molecule>
    <subcellularLocation>
        <location evidence="1">Host cytoplasm</location>
        <location evidence="1">Host perinuclear region</location>
    </subcellularLocation>
    <text evidence="1">Found in perinuclear cytoplasmic viral factories during assembly.</text>
</comment>
<comment type="subcellular location">
    <molecule>p34</molecule>
    <subcellularLocation>
        <location evidence="1">Virion</location>
    </subcellularLocation>
    <subcellularLocation>
        <location evidence="1">Host cytoplasm</location>
        <location evidence="1">Host perinuclear region</location>
    </subcellularLocation>
    <text evidence="1">Found in perinuclear cytoplasmic viral factories during assembly (By similarity). In the virion, located in the core shell, which functions like a matrix between the DNA-containing nucleoid and the inner envelope (By similarity).</text>
</comment>
<comment type="subcellular location">
    <molecule>p14</molecule>
    <subcellularLocation>
        <location evidence="1">Virion</location>
    </subcellularLocation>
    <subcellularLocation>
        <location evidence="1">Host cytoplasm</location>
        <location evidence="1">Host perinuclear region</location>
    </subcellularLocation>
    <text evidence="1">Found in perinuclear cytoplasmic viral factories during assembly. In the virion, located in the core shell, which functions like a matrix between the DNA-containing nucleoid and the inner envelope.</text>
</comment>
<comment type="subcellular location">
    <molecule>p37</molecule>
    <subcellularLocation>
        <location evidence="1">Virion</location>
    </subcellularLocation>
    <subcellularLocation>
        <location evidence="1">Host cytoplasm</location>
        <location evidence="1">Host perinuclear region</location>
    </subcellularLocation>
    <subcellularLocation>
        <location evidence="1">Host nucleus</location>
    </subcellularLocation>
    <text evidence="1">Nuclear at early stages of infection. Found in perinuclear cytoplasmic viral factories during assembly. In the virion, located in the core shell, which functions like a matrix between the DNA-containing nucleoid and the inner envelope.</text>
</comment>
<comment type="subcellular location">
    <molecule>p150</molecule>
    <subcellularLocation>
        <location evidence="1">Virion</location>
    </subcellularLocation>
    <subcellularLocation>
        <location evidence="1">Host cytoplasm</location>
        <location evidence="1">Host perinuclear region</location>
    </subcellularLocation>
    <text evidence="1">Found in perinuclear cytoplasmic viral factories during assembly. In the virion, located in the core shell, which functions like a matrix between the DNA-containing nucleoid and the inner envelope.</text>
</comment>
<comment type="subcellular location">
    <molecule>p5</molecule>
    <subcellularLocation>
        <location evidence="1">Virion</location>
    </subcellularLocation>
</comment>
<comment type="induction">
    <molecule>Polyprotein pp220</molecule>
    <text evidence="3">Expressed in the late phase of the viral replicative cycle.</text>
</comment>
<comment type="PTM">
    <molecule>Polyprotein pp220</molecule>
    <text evidence="1">Specific enzymatic cleavages in vivo by the viral pS273R protease yield mature proteins.</text>
</comment>
<comment type="similarity">
    <text evidence="3">Belongs to the asfivirus polyprotein pp220 family.</text>
</comment>
<feature type="initiator methionine" description="Removed; by host">
    <location>
        <position position="1"/>
    </location>
</feature>
<feature type="chain" id="PRO_0000454833" description="p5">
    <location>
        <begin position="2"/>
        <end position="44"/>
    </location>
</feature>
<feature type="chain" id="PRO_0000373428" description="Polyprotein pp220">
    <location>
        <begin position="45"/>
        <end position="2475"/>
    </location>
</feature>
<feature type="chain" id="PRO_0000373429" description="p34">
    <location>
        <begin position="45"/>
        <end position="368"/>
    </location>
</feature>
<feature type="chain" id="PRO_0000373430" description="p14">
    <location>
        <begin position="369"/>
        <end position="522"/>
    </location>
</feature>
<feature type="chain" id="PRO_0000373431" description="p37">
    <location>
        <begin position="523"/>
        <end position="893"/>
    </location>
</feature>
<feature type="chain" id="PRO_0000373432" description="p150">
    <location>
        <begin position="894"/>
        <end position="2475"/>
    </location>
</feature>
<feature type="coiled-coil region" evidence="2">
    <location>
        <begin position="2184"/>
        <end position="2211"/>
    </location>
</feature>
<feature type="site" description="Cleavage; by viral protease S273R" evidence="1">
    <location>
        <begin position="44"/>
        <end position="45"/>
    </location>
</feature>
<feature type="site" description="Cleavage; by viral protease S273R" evidence="1">
    <location>
        <begin position="368"/>
        <end position="369"/>
    </location>
</feature>
<feature type="site" description="Cleavage; by viral protease S273R" evidence="1">
    <location>
        <begin position="522"/>
        <end position="523"/>
    </location>
</feature>
<feature type="site" description="Cleavage; by viral protease S273R" evidence="1">
    <location>
        <begin position="893"/>
        <end position="894"/>
    </location>
</feature>
<feature type="lipid moiety-binding region" description="N-myristoyl glycine; by host" evidence="1">
    <location>
        <position position="2"/>
    </location>
</feature>